<organism>
    <name type="scientific">Rhodobacter capsulatus</name>
    <name type="common">Rhodopseudomonas capsulata</name>
    <dbReference type="NCBI Taxonomy" id="1061"/>
    <lineage>
        <taxon>Bacteria</taxon>
        <taxon>Pseudomonadati</taxon>
        <taxon>Pseudomonadota</taxon>
        <taxon>Alphaproteobacteria</taxon>
        <taxon>Rhodobacterales</taxon>
        <taxon>Rhodobacter group</taxon>
        <taxon>Rhodobacter</taxon>
    </lineage>
</organism>
<sequence>MNFEQTHRDALTEVLRWRRDVRHFRPDPIDEAVIDRLRAVMDMAPSVGNARPWRVIRVDSPALRAEVLANFNAARAAAGSAYAGEQAEAYATLKLQGIDQAPLQLAVFTHRDPAAGHGLGRASMPVTLQQSTAMAFTRSGCRAGENLGLGMVSVLDPKAVERLLNAPPDWDFVAWLCIGVPEFTDDTPLLHRAGWQENLPTEWERR</sequence>
<gene>
    <name type="primary">bluB</name>
</gene>
<comment type="function">
    <text evidence="1">Involved in the biosynthesis of cobalamin (vitamin B12). Catalyzes the oxidative fragmentation and contraction of the isoalloxazine heterocycle and the cleavage of the ribityl tail of FMNH(2) to form 5,6-dimethylbenzimidazole (DMB) and D-erythrose 4-phosphate (E4P). NAD(P)H is only required initially to reduce FMN and oxygen drives the oxidative fragmentation (By similarity).</text>
</comment>
<comment type="catalytic activity">
    <reaction>
        <text>FMNH2 + O2 = dialurate + 5,6-dimethylbenzimidazole + D-erythrose 4-phosphate + H(+)</text>
        <dbReference type="Rhea" id="RHEA:27345"/>
        <dbReference type="ChEBI" id="CHEBI:15378"/>
        <dbReference type="ChEBI" id="CHEBI:15379"/>
        <dbReference type="ChEBI" id="CHEBI:15890"/>
        <dbReference type="ChEBI" id="CHEBI:16897"/>
        <dbReference type="ChEBI" id="CHEBI:57618"/>
        <dbReference type="ChEBI" id="CHEBI:140629"/>
        <dbReference type="EC" id="1.13.11.79"/>
    </reaction>
</comment>
<comment type="subunit">
    <text evidence="1">Homooctamer.</text>
</comment>
<comment type="similarity">
    <text evidence="2">Belongs to the BluB family.</text>
</comment>
<protein>
    <recommendedName>
        <fullName>5,6-dimethylbenzimidazole synthase</fullName>
        <shortName>DMB synthase</shortName>
        <ecNumber>1.13.11.79</ecNumber>
    </recommendedName>
</protein>
<keyword id="KW-0169">Cobalamin biosynthesis</keyword>
<keyword id="KW-0285">Flavoprotein</keyword>
<keyword id="KW-0288">FMN</keyword>
<keyword id="KW-0520">NAD</keyword>
<keyword id="KW-0521">NADP</keyword>
<keyword id="KW-0547">Nucleotide-binding</keyword>
<keyword id="KW-0560">Oxidoreductase</keyword>
<proteinExistence type="inferred from homology"/>
<accession>P0CY55</accession>
<accession>O68092</accession>
<accession>Q52685</accession>
<evidence type="ECO:0000250" key="1"/>
<evidence type="ECO:0000305" key="2"/>
<reference key="1">
    <citation type="journal article" date="1995" name="J. Bacteriol.">
        <title>Identification and sequence analysis of genes involved in late steps in cobalamin (vitamin B12) synthesis in Rhodobacter capsulatus.</title>
        <authorList>
            <person name="Pollich M."/>
            <person name="Klug G."/>
        </authorList>
    </citation>
    <scope>NUCLEOTIDE SEQUENCE [GENOMIC DNA]</scope>
    <source>
        <strain>ATCC 33303 / B10</strain>
    </source>
</reference>
<dbReference type="EC" id="1.13.11.79"/>
<dbReference type="EMBL" id="Z46611">
    <property type="protein sequence ID" value="CAA86583.1"/>
    <property type="molecule type" value="Genomic_DNA"/>
</dbReference>
<dbReference type="PIR" id="S52225">
    <property type="entry name" value="S52225"/>
</dbReference>
<dbReference type="SMR" id="P0CY55"/>
<dbReference type="GO" id="GO:0102919">
    <property type="term" value="F:5,6-dimethylbenzimidazole synthase activity"/>
    <property type="evidence" value="ECO:0007669"/>
    <property type="project" value="UniProtKB-EC"/>
</dbReference>
<dbReference type="GO" id="GO:0000166">
    <property type="term" value="F:nucleotide binding"/>
    <property type="evidence" value="ECO:0007669"/>
    <property type="project" value="UniProtKB-KW"/>
</dbReference>
<dbReference type="GO" id="GO:0016705">
    <property type="term" value="F:oxidoreductase activity, acting on paired donors, with incorporation or reduction of molecular oxygen"/>
    <property type="evidence" value="ECO:0000250"/>
    <property type="project" value="UniProtKB"/>
</dbReference>
<dbReference type="GO" id="GO:0009236">
    <property type="term" value="P:cobalamin biosynthetic process"/>
    <property type="evidence" value="ECO:0000250"/>
    <property type="project" value="UniProtKB"/>
</dbReference>
<dbReference type="CDD" id="cd02145">
    <property type="entry name" value="BluB"/>
    <property type="match status" value="1"/>
</dbReference>
<dbReference type="Gene3D" id="3.40.109.10">
    <property type="entry name" value="NADH Oxidase"/>
    <property type="match status" value="1"/>
</dbReference>
<dbReference type="InterPro" id="IPR012825">
    <property type="entry name" value="BluB"/>
</dbReference>
<dbReference type="InterPro" id="IPR029479">
    <property type="entry name" value="Nitroreductase"/>
</dbReference>
<dbReference type="InterPro" id="IPR000415">
    <property type="entry name" value="Nitroreductase-like"/>
</dbReference>
<dbReference type="InterPro" id="IPR050627">
    <property type="entry name" value="Nitroreductase/BluB"/>
</dbReference>
<dbReference type="NCBIfam" id="TIGR02476">
    <property type="entry name" value="BluB"/>
    <property type="match status" value="1"/>
</dbReference>
<dbReference type="PANTHER" id="PTHR23026:SF123">
    <property type="entry name" value="NAD(P)H NITROREDUCTASE RV3131-RELATED"/>
    <property type="match status" value="1"/>
</dbReference>
<dbReference type="PANTHER" id="PTHR23026">
    <property type="entry name" value="NADPH NITROREDUCTASE"/>
    <property type="match status" value="1"/>
</dbReference>
<dbReference type="Pfam" id="PF00881">
    <property type="entry name" value="Nitroreductase"/>
    <property type="match status" value="1"/>
</dbReference>
<dbReference type="SUPFAM" id="SSF55469">
    <property type="entry name" value="FMN-dependent nitroreductase-like"/>
    <property type="match status" value="1"/>
</dbReference>
<feature type="chain" id="PRO_0000064946" description="5,6-dimethylbenzimidazole synthase">
    <location>
        <begin position="1"/>
        <end position="206"/>
    </location>
</feature>
<feature type="binding site" evidence="1">
    <location>
        <begin position="18"/>
        <end position="22"/>
    </location>
    <ligand>
        <name>FMN</name>
        <dbReference type="ChEBI" id="CHEBI:58210"/>
    </ligand>
</feature>
<feature type="binding site" evidence="1">
    <location>
        <position position="46"/>
    </location>
    <ligand>
        <name>FMN</name>
        <dbReference type="ChEBI" id="CHEBI:58210"/>
    </ligand>
</feature>
<feature type="binding site" evidence="1">
    <location>
        <position position="95"/>
    </location>
    <ligand>
        <name>FMN</name>
        <dbReference type="ChEBI" id="CHEBI:58210"/>
    </ligand>
</feature>
<feature type="binding site" evidence="1">
    <location>
        <position position="153"/>
    </location>
    <ligand>
        <name>FMN</name>
        <dbReference type="ChEBI" id="CHEBI:58210"/>
    </ligand>
</feature>
<name>BLUB_RHOCA</name>